<organism>
    <name type="scientific">Staphylococcus carnosus (strain TM300)</name>
    <dbReference type="NCBI Taxonomy" id="396513"/>
    <lineage>
        <taxon>Bacteria</taxon>
        <taxon>Bacillati</taxon>
        <taxon>Bacillota</taxon>
        <taxon>Bacilli</taxon>
        <taxon>Bacillales</taxon>
        <taxon>Staphylococcaceae</taxon>
        <taxon>Staphylococcus</taxon>
    </lineage>
</organism>
<feature type="chain" id="PRO_1000164626" description="Alanine racemase">
    <location>
        <begin position="1"/>
        <end position="384"/>
    </location>
</feature>
<feature type="active site" description="Proton acceptor; specific for D-alanine" evidence="1">
    <location>
        <position position="39"/>
    </location>
</feature>
<feature type="active site" description="Proton acceptor; specific for L-alanine" evidence="1">
    <location>
        <position position="265"/>
    </location>
</feature>
<feature type="binding site" evidence="1">
    <location>
        <position position="138"/>
    </location>
    <ligand>
        <name>substrate</name>
    </ligand>
</feature>
<feature type="binding site" evidence="1">
    <location>
        <position position="312"/>
    </location>
    <ligand>
        <name>substrate</name>
    </ligand>
</feature>
<feature type="modified residue" description="N6-(pyridoxal phosphate)lysine" evidence="1">
    <location>
        <position position="39"/>
    </location>
</feature>
<accession>B9DMI9</accession>
<name>ALR_STACT</name>
<protein>
    <recommendedName>
        <fullName evidence="1">Alanine racemase</fullName>
        <ecNumber evidence="1">5.1.1.1</ecNumber>
    </recommendedName>
</protein>
<sequence>MADKFYRPTYLKVDLEAILKNYQVLGKLQPNKTVMPVIKANAYGMGSVNVGHYLKKHGAEFFAVATLDEAIELRMHGIDTKILILGVVMPKDINKAIQHRVALTVPSYAWLNEAIKYLDEDLEKDLWLHVKIDTGMGRLGVKSAEDYQKTVALIQSHEHLIFEGVFTHFAQADEDSPHTKEQYEIFENWVDTIPHPSYVHAQNSAGTILFDAPICNMVRTGISLYGYYPSEYVEEQTNAELYPSAEWITEIVDIKYLNIGDTVSYGSTYTAEKSEKIAILPVGYADGFPRMMQGTNVEVNGQQCTIIGRVCMDQMMIALPENEDINVGDKVTLLNREHSGPQSLLSHAKQQQTINYEVLCRIGRRVPRIYEPEKVFDIVNELQK</sequence>
<evidence type="ECO:0000255" key="1">
    <source>
        <dbReference type="HAMAP-Rule" id="MF_01201"/>
    </source>
</evidence>
<comment type="function">
    <text evidence="1">Catalyzes the interconversion of L-alanine and D-alanine. May also act on other amino acids.</text>
</comment>
<comment type="catalytic activity">
    <reaction evidence="1">
        <text>L-alanine = D-alanine</text>
        <dbReference type="Rhea" id="RHEA:20249"/>
        <dbReference type="ChEBI" id="CHEBI:57416"/>
        <dbReference type="ChEBI" id="CHEBI:57972"/>
        <dbReference type="EC" id="5.1.1.1"/>
    </reaction>
</comment>
<comment type="cofactor">
    <cofactor evidence="1">
        <name>pyridoxal 5'-phosphate</name>
        <dbReference type="ChEBI" id="CHEBI:597326"/>
    </cofactor>
</comment>
<comment type="pathway">
    <text evidence="1">Amino-acid biosynthesis; D-alanine biosynthesis; D-alanine from L-alanine: step 1/1.</text>
</comment>
<comment type="similarity">
    <text evidence="1">Belongs to the alanine racemase family.</text>
</comment>
<reference key="1">
    <citation type="journal article" date="2009" name="Appl. Environ. Microbiol.">
        <title>Genome analysis of the meat starter culture bacterium Staphylococcus carnosus TM300.</title>
        <authorList>
            <person name="Rosenstein R."/>
            <person name="Nerz C."/>
            <person name="Biswas L."/>
            <person name="Resch A."/>
            <person name="Raddatz G."/>
            <person name="Schuster S.C."/>
            <person name="Goetz F."/>
        </authorList>
    </citation>
    <scope>NUCLEOTIDE SEQUENCE [LARGE SCALE GENOMIC DNA]</scope>
    <source>
        <strain>TM300</strain>
    </source>
</reference>
<dbReference type="EC" id="5.1.1.1" evidence="1"/>
<dbReference type="EMBL" id="AM295250">
    <property type="protein sequence ID" value="CAL28481.1"/>
    <property type="molecule type" value="Genomic_DNA"/>
</dbReference>
<dbReference type="RefSeq" id="WP_015900821.1">
    <property type="nucleotide sequence ID" value="NC_012121.1"/>
</dbReference>
<dbReference type="SMR" id="B9DMI9"/>
<dbReference type="GeneID" id="93794030"/>
<dbReference type="KEGG" id="sca:SCA_1576"/>
<dbReference type="eggNOG" id="COG0787">
    <property type="taxonomic scope" value="Bacteria"/>
</dbReference>
<dbReference type="HOGENOM" id="CLU_028393_2_1_9"/>
<dbReference type="OrthoDB" id="9813814at2"/>
<dbReference type="BioCyc" id="SCAR396513:SCA_RS08005-MONOMER"/>
<dbReference type="UniPathway" id="UPA00042">
    <property type="reaction ID" value="UER00497"/>
</dbReference>
<dbReference type="Proteomes" id="UP000000444">
    <property type="component" value="Chromosome"/>
</dbReference>
<dbReference type="GO" id="GO:0005829">
    <property type="term" value="C:cytosol"/>
    <property type="evidence" value="ECO:0007669"/>
    <property type="project" value="TreeGrafter"/>
</dbReference>
<dbReference type="GO" id="GO:0008784">
    <property type="term" value="F:alanine racemase activity"/>
    <property type="evidence" value="ECO:0007669"/>
    <property type="project" value="UniProtKB-UniRule"/>
</dbReference>
<dbReference type="GO" id="GO:0030170">
    <property type="term" value="F:pyridoxal phosphate binding"/>
    <property type="evidence" value="ECO:0007669"/>
    <property type="project" value="UniProtKB-UniRule"/>
</dbReference>
<dbReference type="GO" id="GO:0030632">
    <property type="term" value="P:D-alanine biosynthetic process"/>
    <property type="evidence" value="ECO:0007669"/>
    <property type="project" value="UniProtKB-UniRule"/>
</dbReference>
<dbReference type="GO" id="GO:0009252">
    <property type="term" value="P:peptidoglycan biosynthetic process"/>
    <property type="evidence" value="ECO:0007669"/>
    <property type="project" value="TreeGrafter"/>
</dbReference>
<dbReference type="CDD" id="cd00430">
    <property type="entry name" value="PLPDE_III_AR"/>
    <property type="match status" value="1"/>
</dbReference>
<dbReference type="FunFam" id="3.20.20.10:FF:000002">
    <property type="entry name" value="Alanine racemase"/>
    <property type="match status" value="1"/>
</dbReference>
<dbReference type="Gene3D" id="3.20.20.10">
    <property type="entry name" value="Alanine racemase"/>
    <property type="match status" value="1"/>
</dbReference>
<dbReference type="Gene3D" id="2.40.37.10">
    <property type="entry name" value="Lyase, Ornithine Decarboxylase, Chain A, domain 1"/>
    <property type="match status" value="1"/>
</dbReference>
<dbReference type="HAMAP" id="MF_01201">
    <property type="entry name" value="Ala_racemase"/>
    <property type="match status" value="1"/>
</dbReference>
<dbReference type="InterPro" id="IPR000821">
    <property type="entry name" value="Ala_racemase"/>
</dbReference>
<dbReference type="InterPro" id="IPR009006">
    <property type="entry name" value="Ala_racemase/Decarboxylase_C"/>
</dbReference>
<dbReference type="InterPro" id="IPR011079">
    <property type="entry name" value="Ala_racemase_C"/>
</dbReference>
<dbReference type="InterPro" id="IPR001608">
    <property type="entry name" value="Ala_racemase_N"/>
</dbReference>
<dbReference type="InterPro" id="IPR029066">
    <property type="entry name" value="PLP-binding_barrel"/>
</dbReference>
<dbReference type="NCBIfam" id="TIGR00492">
    <property type="entry name" value="alr"/>
    <property type="match status" value="1"/>
</dbReference>
<dbReference type="PANTHER" id="PTHR30511">
    <property type="entry name" value="ALANINE RACEMASE"/>
    <property type="match status" value="1"/>
</dbReference>
<dbReference type="PANTHER" id="PTHR30511:SF0">
    <property type="entry name" value="ALANINE RACEMASE, CATABOLIC-RELATED"/>
    <property type="match status" value="1"/>
</dbReference>
<dbReference type="Pfam" id="PF00842">
    <property type="entry name" value="Ala_racemase_C"/>
    <property type="match status" value="1"/>
</dbReference>
<dbReference type="Pfam" id="PF01168">
    <property type="entry name" value="Ala_racemase_N"/>
    <property type="match status" value="1"/>
</dbReference>
<dbReference type="PRINTS" id="PR00992">
    <property type="entry name" value="ALARACEMASE"/>
</dbReference>
<dbReference type="SMART" id="SM01005">
    <property type="entry name" value="Ala_racemase_C"/>
    <property type="match status" value="1"/>
</dbReference>
<dbReference type="SUPFAM" id="SSF50621">
    <property type="entry name" value="Alanine racemase C-terminal domain-like"/>
    <property type="match status" value="1"/>
</dbReference>
<dbReference type="SUPFAM" id="SSF51419">
    <property type="entry name" value="PLP-binding barrel"/>
    <property type="match status" value="1"/>
</dbReference>
<keyword id="KW-0413">Isomerase</keyword>
<keyword id="KW-0663">Pyridoxal phosphate</keyword>
<keyword id="KW-1185">Reference proteome</keyword>
<proteinExistence type="inferred from homology"/>
<gene>
    <name type="primary">alr</name>
    <name type="ordered locus">Sca_1576</name>
</gene>